<keyword id="KW-0028">Amino-acid biosynthesis</keyword>
<keyword id="KW-0057">Aromatic amino acid biosynthesis</keyword>
<keyword id="KW-0067">ATP-binding</keyword>
<keyword id="KW-0963">Cytoplasm</keyword>
<keyword id="KW-0418">Kinase</keyword>
<keyword id="KW-0460">Magnesium</keyword>
<keyword id="KW-0479">Metal-binding</keyword>
<keyword id="KW-0547">Nucleotide-binding</keyword>
<keyword id="KW-1185">Reference proteome</keyword>
<keyword id="KW-0808">Transferase</keyword>
<organism>
    <name type="scientific">Bacillus subtilis (strain 168)</name>
    <dbReference type="NCBI Taxonomy" id="224308"/>
    <lineage>
        <taxon>Bacteria</taxon>
        <taxon>Bacillati</taxon>
        <taxon>Bacillota</taxon>
        <taxon>Bacilli</taxon>
        <taxon>Bacillales</taxon>
        <taxon>Bacillaceae</taxon>
        <taxon>Bacillus</taxon>
    </lineage>
</organism>
<gene>
    <name evidence="1" type="primary">aroK</name>
    <name type="synonym">aroI</name>
    <name type="ordered locus">BSU03150</name>
</gene>
<comment type="function">
    <text evidence="1">Catalyzes the specific phosphorylation of the 3-hydroxyl group of shikimic acid using ATP as a cosubstrate.</text>
</comment>
<comment type="catalytic activity">
    <reaction evidence="1">
        <text>shikimate + ATP = 3-phosphoshikimate + ADP + H(+)</text>
        <dbReference type="Rhea" id="RHEA:13121"/>
        <dbReference type="ChEBI" id="CHEBI:15378"/>
        <dbReference type="ChEBI" id="CHEBI:30616"/>
        <dbReference type="ChEBI" id="CHEBI:36208"/>
        <dbReference type="ChEBI" id="CHEBI:145989"/>
        <dbReference type="ChEBI" id="CHEBI:456216"/>
        <dbReference type="EC" id="2.7.1.71"/>
    </reaction>
</comment>
<comment type="cofactor">
    <cofactor evidence="1">
        <name>Mg(2+)</name>
        <dbReference type="ChEBI" id="CHEBI:18420"/>
    </cofactor>
    <text evidence="1">Binds 1 Mg(2+) ion per subunit.</text>
</comment>
<comment type="pathway">
    <text evidence="1">Metabolic intermediate biosynthesis; chorismate biosynthesis; chorismate from D-erythrose 4-phosphate and phosphoenolpyruvate: step 5/7.</text>
</comment>
<comment type="subunit">
    <text evidence="1">Monomer.</text>
</comment>
<comment type="subcellular location">
    <subcellularLocation>
        <location evidence="1">Cytoplasm</location>
    </subcellularLocation>
</comment>
<comment type="similarity">
    <text evidence="1">Belongs to the shikimate kinase family.</text>
</comment>
<feature type="chain" id="PRO_0000192368" description="Shikimate kinase">
    <location>
        <begin position="1"/>
        <end position="186"/>
    </location>
</feature>
<feature type="binding site" evidence="1">
    <location>
        <begin position="21"/>
        <end position="26"/>
    </location>
    <ligand>
        <name>ATP</name>
        <dbReference type="ChEBI" id="CHEBI:30616"/>
    </ligand>
</feature>
<feature type="binding site" evidence="1">
    <location>
        <position position="25"/>
    </location>
    <ligand>
        <name>Mg(2+)</name>
        <dbReference type="ChEBI" id="CHEBI:18420"/>
    </ligand>
</feature>
<feature type="binding site" evidence="1">
    <location>
        <position position="43"/>
    </location>
    <ligand>
        <name>substrate</name>
    </ligand>
</feature>
<feature type="binding site" evidence="1">
    <location>
        <position position="67"/>
    </location>
    <ligand>
        <name>substrate</name>
    </ligand>
</feature>
<feature type="binding site" evidence="1">
    <location>
        <position position="90"/>
    </location>
    <ligand>
        <name>substrate</name>
    </ligand>
</feature>
<feature type="binding site" evidence="1">
    <location>
        <position position="129"/>
    </location>
    <ligand>
        <name>ATP</name>
        <dbReference type="ChEBI" id="CHEBI:30616"/>
    </ligand>
</feature>
<feature type="binding site" evidence="1">
    <location>
        <position position="147"/>
    </location>
    <ligand>
        <name>substrate</name>
    </ligand>
</feature>
<feature type="sequence conflict" description="In Ref. 1; BAA09761 and 3; BAA08949." evidence="2" ref="1 3">
    <original>F</original>
    <variation>S</variation>
    <location>
        <position position="66"/>
    </location>
</feature>
<dbReference type="EC" id="2.7.1.71" evidence="1"/>
<dbReference type="EMBL" id="D63474">
    <property type="protein sequence ID" value="BAA09761.1"/>
    <property type="molecule type" value="Genomic_DNA"/>
</dbReference>
<dbReference type="EMBL" id="D50453">
    <property type="protein sequence ID" value="BAA08949.1"/>
    <property type="molecule type" value="Genomic_DNA"/>
</dbReference>
<dbReference type="EMBL" id="X81355">
    <property type="protein sequence ID" value="CAA57123.1"/>
    <property type="molecule type" value="Genomic_DNA"/>
</dbReference>
<dbReference type="EMBL" id="AL009126">
    <property type="protein sequence ID" value="CAB12109.2"/>
    <property type="molecule type" value="Genomic_DNA"/>
</dbReference>
<dbReference type="PIR" id="I39782">
    <property type="entry name" value="I39782"/>
</dbReference>
<dbReference type="RefSeq" id="NP_388197.2">
    <property type="nucleotide sequence ID" value="NC_000964.3"/>
</dbReference>
<dbReference type="RefSeq" id="WP_003246473.1">
    <property type="nucleotide sequence ID" value="NZ_OZ025638.1"/>
</dbReference>
<dbReference type="SMR" id="P37944"/>
<dbReference type="FunCoup" id="P37944">
    <property type="interactions" value="577"/>
</dbReference>
<dbReference type="STRING" id="224308.BSU03150"/>
<dbReference type="PaxDb" id="224308-BSU03150"/>
<dbReference type="EnsemblBacteria" id="CAB12109">
    <property type="protein sequence ID" value="CAB12109"/>
    <property type="gene ID" value="BSU_03150"/>
</dbReference>
<dbReference type="GeneID" id="938343"/>
<dbReference type="KEGG" id="bsu:BSU03150"/>
<dbReference type="PATRIC" id="fig|224308.179.peg.329"/>
<dbReference type="eggNOG" id="COG0703">
    <property type="taxonomic scope" value="Bacteria"/>
</dbReference>
<dbReference type="InParanoid" id="P37944"/>
<dbReference type="OrthoDB" id="9800332at2"/>
<dbReference type="PhylomeDB" id="P37944"/>
<dbReference type="BioCyc" id="BSUB:BSU03150-MONOMER"/>
<dbReference type="BioCyc" id="MetaCyc:AROIBACSU-MONOMER"/>
<dbReference type="UniPathway" id="UPA00053">
    <property type="reaction ID" value="UER00088"/>
</dbReference>
<dbReference type="Proteomes" id="UP000001570">
    <property type="component" value="Chromosome"/>
</dbReference>
<dbReference type="GO" id="GO:0005829">
    <property type="term" value="C:cytosol"/>
    <property type="evidence" value="ECO:0000318"/>
    <property type="project" value="GO_Central"/>
</dbReference>
<dbReference type="GO" id="GO:0005524">
    <property type="term" value="F:ATP binding"/>
    <property type="evidence" value="ECO:0007669"/>
    <property type="project" value="UniProtKB-UniRule"/>
</dbReference>
<dbReference type="GO" id="GO:0000287">
    <property type="term" value="F:magnesium ion binding"/>
    <property type="evidence" value="ECO:0007669"/>
    <property type="project" value="UniProtKB-UniRule"/>
</dbReference>
<dbReference type="GO" id="GO:0004765">
    <property type="term" value="F:shikimate kinase activity"/>
    <property type="evidence" value="ECO:0000318"/>
    <property type="project" value="GO_Central"/>
</dbReference>
<dbReference type="GO" id="GO:0008652">
    <property type="term" value="P:amino acid biosynthetic process"/>
    <property type="evidence" value="ECO:0007669"/>
    <property type="project" value="UniProtKB-KW"/>
</dbReference>
<dbReference type="GO" id="GO:0009073">
    <property type="term" value="P:aromatic amino acid family biosynthetic process"/>
    <property type="evidence" value="ECO:0007669"/>
    <property type="project" value="UniProtKB-KW"/>
</dbReference>
<dbReference type="GO" id="GO:0009423">
    <property type="term" value="P:chorismate biosynthetic process"/>
    <property type="evidence" value="ECO:0007669"/>
    <property type="project" value="UniProtKB-UniRule"/>
</dbReference>
<dbReference type="CDD" id="cd00464">
    <property type="entry name" value="SK"/>
    <property type="match status" value="1"/>
</dbReference>
<dbReference type="FunFam" id="3.40.50.300:FF:002236">
    <property type="entry name" value="Shikimate kinase"/>
    <property type="match status" value="1"/>
</dbReference>
<dbReference type="Gene3D" id="3.40.50.300">
    <property type="entry name" value="P-loop containing nucleotide triphosphate hydrolases"/>
    <property type="match status" value="1"/>
</dbReference>
<dbReference type="HAMAP" id="MF_00109">
    <property type="entry name" value="Shikimate_kinase"/>
    <property type="match status" value="1"/>
</dbReference>
<dbReference type="InterPro" id="IPR027417">
    <property type="entry name" value="P-loop_NTPase"/>
</dbReference>
<dbReference type="InterPro" id="IPR031322">
    <property type="entry name" value="Shikimate/glucono_kinase"/>
</dbReference>
<dbReference type="InterPro" id="IPR000623">
    <property type="entry name" value="Shikimate_kinase/TSH1"/>
</dbReference>
<dbReference type="InterPro" id="IPR023000">
    <property type="entry name" value="Shikimate_kinase_CS"/>
</dbReference>
<dbReference type="PANTHER" id="PTHR21087">
    <property type="entry name" value="SHIKIMATE KINASE"/>
    <property type="match status" value="1"/>
</dbReference>
<dbReference type="PANTHER" id="PTHR21087:SF16">
    <property type="entry name" value="SHIKIMATE KINASE 1, CHLOROPLASTIC"/>
    <property type="match status" value="1"/>
</dbReference>
<dbReference type="Pfam" id="PF01202">
    <property type="entry name" value="SKI"/>
    <property type="match status" value="1"/>
</dbReference>
<dbReference type="PRINTS" id="PR01100">
    <property type="entry name" value="SHIKIMTKNASE"/>
</dbReference>
<dbReference type="SUPFAM" id="SSF52540">
    <property type="entry name" value="P-loop containing nucleoside triphosphate hydrolases"/>
    <property type="match status" value="1"/>
</dbReference>
<dbReference type="PROSITE" id="PS01128">
    <property type="entry name" value="SHIKIMATE_KINASE"/>
    <property type="match status" value="1"/>
</dbReference>
<accession>P37944</accession>
<sequence length="186" mass="21923">MNAKRAIPVRERNIVLIGFMGVGKTTIGQLVAKKLYRDFIDIDQQIEKDFNMSIPEIFEKKGEDFFRKTEKEYILDICHHKRFKIVSLGGGSFKQEEIRNCCLENCLVLHLDLSWENWKQRADLLIESRPVLHNRSMDEMEQLFNERKVIYDKHNSKVATDNLSPEEVADYIVETLKIGWDLYQPM</sequence>
<reference key="1">
    <citation type="journal article" date="1994" name="J. Ferment. Bioeng.">
        <title>Nucleotide sequence of the shikimate kinase gene (aroI) of Bacillus subtilis.</title>
        <authorList>
            <person name="Nakane A."/>
            <person name="Ogawa K."/>
            <person name="Nakamura K."/>
            <person name="Yamane K."/>
        </authorList>
    </citation>
    <scope>NUCLEOTIDE SEQUENCE [GENOMIC DNA]</scope>
    <source>
        <strain>168</strain>
    </source>
</reference>
<reference key="2">
    <citation type="submission" date="1994-09" db="EMBL/GenBank/DDBJ databases">
        <title>Cloning and nucleotide structure of aroI gene of Bacillus subtilis 168.</title>
        <authorList>
            <person name="Bolotin A.P."/>
            <person name="Khazak V.E."/>
            <person name="Gusarov I.I."/>
            <person name="Stoinova N."/>
            <person name="Yomantas Y.I."/>
            <person name="Kozlov Y.I."/>
        </authorList>
    </citation>
    <scope>NUCLEOTIDE SEQUENCE [GENOMIC DNA]</scope>
    <source>
        <strain>168</strain>
    </source>
</reference>
<reference key="3">
    <citation type="journal article" date="1996" name="Microbiology">
        <title>The 25 degrees-36 degrees region of the Bacillus subtilis chromosome: determination of the sequence of a 146 kb segment and identification of 113 genes.</title>
        <authorList>
            <person name="Yamane K."/>
            <person name="Kumano M."/>
            <person name="Kurita K."/>
        </authorList>
    </citation>
    <scope>NUCLEOTIDE SEQUENCE [GENOMIC DNA]</scope>
    <source>
        <strain>168</strain>
    </source>
</reference>
<reference key="4">
    <citation type="journal article" date="1997" name="Nature">
        <title>The complete genome sequence of the Gram-positive bacterium Bacillus subtilis.</title>
        <authorList>
            <person name="Kunst F."/>
            <person name="Ogasawara N."/>
            <person name="Moszer I."/>
            <person name="Albertini A.M."/>
            <person name="Alloni G."/>
            <person name="Azevedo V."/>
            <person name="Bertero M.G."/>
            <person name="Bessieres P."/>
            <person name="Bolotin A."/>
            <person name="Borchert S."/>
            <person name="Borriss R."/>
            <person name="Boursier L."/>
            <person name="Brans A."/>
            <person name="Braun M."/>
            <person name="Brignell S.C."/>
            <person name="Bron S."/>
            <person name="Brouillet S."/>
            <person name="Bruschi C.V."/>
            <person name="Caldwell B."/>
            <person name="Capuano V."/>
            <person name="Carter N.M."/>
            <person name="Choi S.-K."/>
            <person name="Codani J.-J."/>
            <person name="Connerton I.F."/>
            <person name="Cummings N.J."/>
            <person name="Daniel R.A."/>
            <person name="Denizot F."/>
            <person name="Devine K.M."/>
            <person name="Duesterhoeft A."/>
            <person name="Ehrlich S.D."/>
            <person name="Emmerson P.T."/>
            <person name="Entian K.-D."/>
            <person name="Errington J."/>
            <person name="Fabret C."/>
            <person name="Ferrari E."/>
            <person name="Foulger D."/>
            <person name="Fritz C."/>
            <person name="Fujita M."/>
            <person name="Fujita Y."/>
            <person name="Fuma S."/>
            <person name="Galizzi A."/>
            <person name="Galleron N."/>
            <person name="Ghim S.-Y."/>
            <person name="Glaser P."/>
            <person name="Goffeau A."/>
            <person name="Golightly E.J."/>
            <person name="Grandi G."/>
            <person name="Guiseppi G."/>
            <person name="Guy B.J."/>
            <person name="Haga K."/>
            <person name="Haiech J."/>
            <person name="Harwood C.R."/>
            <person name="Henaut A."/>
            <person name="Hilbert H."/>
            <person name="Holsappel S."/>
            <person name="Hosono S."/>
            <person name="Hullo M.-F."/>
            <person name="Itaya M."/>
            <person name="Jones L.-M."/>
            <person name="Joris B."/>
            <person name="Karamata D."/>
            <person name="Kasahara Y."/>
            <person name="Klaerr-Blanchard M."/>
            <person name="Klein C."/>
            <person name="Kobayashi Y."/>
            <person name="Koetter P."/>
            <person name="Koningstein G."/>
            <person name="Krogh S."/>
            <person name="Kumano M."/>
            <person name="Kurita K."/>
            <person name="Lapidus A."/>
            <person name="Lardinois S."/>
            <person name="Lauber J."/>
            <person name="Lazarevic V."/>
            <person name="Lee S.-M."/>
            <person name="Levine A."/>
            <person name="Liu H."/>
            <person name="Masuda S."/>
            <person name="Mauel C."/>
            <person name="Medigue C."/>
            <person name="Medina N."/>
            <person name="Mellado R.P."/>
            <person name="Mizuno M."/>
            <person name="Moestl D."/>
            <person name="Nakai S."/>
            <person name="Noback M."/>
            <person name="Noone D."/>
            <person name="O'Reilly M."/>
            <person name="Ogawa K."/>
            <person name="Ogiwara A."/>
            <person name="Oudega B."/>
            <person name="Park S.-H."/>
            <person name="Parro V."/>
            <person name="Pohl T.M."/>
            <person name="Portetelle D."/>
            <person name="Porwollik S."/>
            <person name="Prescott A.M."/>
            <person name="Presecan E."/>
            <person name="Pujic P."/>
            <person name="Purnelle B."/>
            <person name="Rapoport G."/>
            <person name="Rey M."/>
            <person name="Reynolds S."/>
            <person name="Rieger M."/>
            <person name="Rivolta C."/>
            <person name="Rocha E."/>
            <person name="Roche B."/>
            <person name="Rose M."/>
            <person name="Sadaie Y."/>
            <person name="Sato T."/>
            <person name="Scanlan E."/>
            <person name="Schleich S."/>
            <person name="Schroeter R."/>
            <person name="Scoffone F."/>
            <person name="Sekiguchi J."/>
            <person name="Sekowska A."/>
            <person name="Seror S.J."/>
            <person name="Serror P."/>
            <person name="Shin B.-S."/>
            <person name="Soldo B."/>
            <person name="Sorokin A."/>
            <person name="Tacconi E."/>
            <person name="Takagi T."/>
            <person name="Takahashi H."/>
            <person name="Takemaru K."/>
            <person name="Takeuchi M."/>
            <person name="Tamakoshi A."/>
            <person name="Tanaka T."/>
            <person name="Terpstra P."/>
            <person name="Tognoni A."/>
            <person name="Tosato V."/>
            <person name="Uchiyama S."/>
            <person name="Vandenbol M."/>
            <person name="Vannier F."/>
            <person name="Vassarotti A."/>
            <person name="Viari A."/>
            <person name="Wambutt R."/>
            <person name="Wedler E."/>
            <person name="Wedler H."/>
            <person name="Weitzenegger T."/>
            <person name="Winters P."/>
            <person name="Wipat A."/>
            <person name="Yamamoto H."/>
            <person name="Yamane K."/>
            <person name="Yasumoto K."/>
            <person name="Yata K."/>
            <person name="Yoshida K."/>
            <person name="Yoshikawa H.-F."/>
            <person name="Zumstein E."/>
            <person name="Yoshikawa H."/>
            <person name="Danchin A."/>
        </authorList>
    </citation>
    <scope>NUCLEOTIDE SEQUENCE [LARGE SCALE GENOMIC DNA]</scope>
    <source>
        <strain>168</strain>
    </source>
</reference>
<reference key="5">
    <citation type="journal article" date="2009" name="Microbiology">
        <title>From a consortium sequence to a unified sequence: the Bacillus subtilis 168 reference genome a decade later.</title>
        <authorList>
            <person name="Barbe V."/>
            <person name="Cruveiller S."/>
            <person name="Kunst F."/>
            <person name="Lenoble P."/>
            <person name="Meurice G."/>
            <person name="Sekowska A."/>
            <person name="Vallenet D."/>
            <person name="Wang T."/>
            <person name="Moszer I."/>
            <person name="Medigue C."/>
            <person name="Danchin A."/>
        </authorList>
    </citation>
    <scope>SEQUENCE REVISION TO 66</scope>
</reference>
<evidence type="ECO:0000255" key="1">
    <source>
        <dbReference type="HAMAP-Rule" id="MF_00109"/>
    </source>
</evidence>
<evidence type="ECO:0000305" key="2"/>
<protein>
    <recommendedName>
        <fullName evidence="1">Shikimate kinase</fullName>
        <shortName evidence="1">SK</shortName>
        <ecNumber evidence="1">2.7.1.71</ecNumber>
    </recommendedName>
</protein>
<name>AROK_BACSU</name>
<proteinExistence type="inferred from homology"/>